<comment type="function">
    <text evidence="1">Catalyzes the ATP-dependent conversion of 7-carboxy-7-deazaguanine (CDG) to 7-cyano-7-deazaguanine (preQ(0)).</text>
</comment>
<comment type="catalytic activity">
    <reaction evidence="1">
        <text>7-carboxy-7-deazaguanine + NH4(+) + ATP = 7-cyano-7-deazaguanine + ADP + phosphate + H2O + H(+)</text>
        <dbReference type="Rhea" id="RHEA:27982"/>
        <dbReference type="ChEBI" id="CHEBI:15377"/>
        <dbReference type="ChEBI" id="CHEBI:15378"/>
        <dbReference type="ChEBI" id="CHEBI:28938"/>
        <dbReference type="ChEBI" id="CHEBI:30616"/>
        <dbReference type="ChEBI" id="CHEBI:43474"/>
        <dbReference type="ChEBI" id="CHEBI:45075"/>
        <dbReference type="ChEBI" id="CHEBI:61036"/>
        <dbReference type="ChEBI" id="CHEBI:456216"/>
        <dbReference type="EC" id="6.3.4.20"/>
    </reaction>
</comment>
<comment type="cofactor">
    <cofactor evidence="1">
        <name>Zn(2+)</name>
        <dbReference type="ChEBI" id="CHEBI:29105"/>
    </cofactor>
    <text evidence="1">Binds 1 zinc ion per subunit.</text>
</comment>
<comment type="pathway">
    <text evidence="1">Purine metabolism; 7-cyano-7-deazaguanine biosynthesis.</text>
</comment>
<comment type="similarity">
    <text evidence="1">Belongs to the QueC family.</text>
</comment>
<protein>
    <recommendedName>
        <fullName evidence="1">7-cyano-7-deazaguanine synthase</fullName>
        <ecNumber evidence="1">6.3.4.20</ecNumber>
    </recommendedName>
    <alternativeName>
        <fullName evidence="1">7-cyano-7-carbaguanine synthase</fullName>
    </alternativeName>
    <alternativeName>
        <fullName evidence="1">PreQ(0) synthase</fullName>
    </alternativeName>
    <alternativeName>
        <fullName evidence="1">Queuosine biosynthesis protein QueC</fullName>
    </alternativeName>
</protein>
<sequence length="235" mass="25818">MNRDSRTALVLFSGGQDSTTCLAWALTRFAHVETLAFDYGQRHRIELDCRLTVLAQLREQFPDWAERLGADHLLDLSLLAQISDTALTTEREIELQANGLPNTFVPGRNLLFLGMAATLAYRRSASVLVGGMCETDYSGYPDCRDNTLKALQVALSLGLAAPMTIETPLMFLTKAQTWTLAEDLGGAPLVELITEHTHTCYLGERGQRHAWGHGCGHCPACELRHAGHAAWLGGR</sequence>
<organism>
    <name type="scientific">Leptothrix cholodnii (strain ATCC 51168 / LMG 8142 / SP-6)</name>
    <name type="common">Leptothrix discophora (strain SP-6)</name>
    <dbReference type="NCBI Taxonomy" id="395495"/>
    <lineage>
        <taxon>Bacteria</taxon>
        <taxon>Pseudomonadati</taxon>
        <taxon>Pseudomonadota</taxon>
        <taxon>Betaproteobacteria</taxon>
        <taxon>Burkholderiales</taxon>
        <taxon>Sphaerotilaceae</taxon>
        <taxon>Leptothrix</taxon>
    </lineage>
</organism>
<evidence type="ECO:0000255" key="1">
    <source>
        <dbReference type="HAMAP-Rule" id="MF_01633"/>
    </source>
</evidence>
<gene>
    <name evidence="1" type="primary">queC</name>
    <name type="ordered locus">Lcho_4006</name>
</gene>
<name>QUEC_LEPCP</name>
<reference key="1">
    <citation type="submission" date="2008-03" db="EMBL/GenBank/DDBJ databases">
        <title>Complete sequence of Leptothrix cholodnii SP-6.</title>
        <authorList>
            <consortium name="US DOE Joint Genome Institute"/>
            <person name="Copeland A."/>
            <person name="Lucas S."/>
            <person name="Lapidus A."/>
            <person name="Glavina del Rio T."/>
            <person name="Dalin E."/>
            <person name="Tice H."/>
            <person name="Bruce D."/>
            <person name="Goodwin L."/>
            <person name="Pitluck S."/>
            <person name="Chertkov O."/>
            <person name="Brettin T."/>
            <person name="Detter J.C."/>
            <person name="Han C."/>
            <person name="Kuske C.R."/>
            <person name="Schmutz J."/>
            <person name="Larimer F."/>
            <person name="Land M."/>
            <person name="Hauser L."/>
            <person name="Kyrpides N."/>
            <person name="Lykidis A."/>
            <person name="Emerson D."/>
            <person name="Richardson P."/>
        </authorList>
    </citation>
    <scope>NUCLEOTIDE SEQUENCE [LARGE SCALE GENOMIC DNA]</scope>
    <source>
        <strain>ATCC 51168 / LMG 8142 / SP-6</strain>
    </source>
</reference>
<keyword id="KW-0067">ATP-binding</keyword>
<keyword id="KW-0436">Ligase</keyword>
<keyword id="KW-0479">Metal-binding</keyword>
<keyword id="KW-0547">Nucleotide-binding</keyword>
<keyword id="KW-0671">Queuosine biosynthesis</keyword>
<keyword id="KW-1185">Reference proteome</keyword>
<keyword id="KW-0862">Zinc</keyword>
<accession>B1Y8J4</accession>
<proteinExistence type="inferred from homology"/>
<dbReference type="EC" id="6.3.4.20" evidence="1"/>
<dbReference type="EMBL" id="CP001013">
    <property type="protein sequence ID" value="ACB36260.1"/>
    <property type="molecule type" value="Genomic_DNA"/>
</dbReference>
<dbReference type="RefSeq" id="WP_012349005.1">
    <property type="nucleotide sequence ID" value="NC_010524.1"/>
</dbReference>
<dbReference type="SMR" id="B1Y8J4"/>
<dbReference type="STRING" id="395495.Lcho_4006"/>
<dbReference type="KEGG" id="lch:Lcho_4006"/>
<dbReference type="eggNOG" id="COG0603">
    <property type="taxonomic scope" value="Bacteria"/>
</dbReference>
<dbReference type="HOGENOM" id="CLU_081854_0_0_4"/>
<dbReference type="OrthoDB" id="9789567at2"/>
<dbReference type="UniPathway" id="UPA00391"/>
<dbReference type="Proteomes" id="UP000001693">
    <property type="component" value="Chromosome"/>
</dbReference>
<dbReference type="GO" id="GO:0005524">
    <property type="term" value="F:ATP binding"/>
    <property type="evidence" value="ECO:0007669"/>
    <property type="project" value="UniProtKB-UniRule"/>
</dbReference>
<dbReference type="GO" id="GO:0016879">
    <property type="term" value="F:ligase activity, forming carbon-nitrogen bonds"/>
    <property type="evidence" value="ECO:0007669"/>
    <property type="project" value="UniProtKB-UniRule"/>
</dbReference>
<dbReference type="GO" id="GO:0008270">
    <property type="term" value="F:zinc ion binding"/>
    <property type="evidence" value="ECO:0007669"/>
    <property type="project" value="UniProtKB-UniRule"/>
</dbReference>
<dbReference type="GO" id="GO:0008616">
    <property type="term" value="P:queuosine biosynthetic process"/>
    <property type="evidence" value="ECO:0007669"/>
    <property type="project" value="UniProtKB-UniRule"/>
</dbReference>
<dbReference type="CDD" id="cd01995">
    <property type="entry name" value="QueC-like"/>
    <property type="match status" value="1"/>
</dbReference>
<dbReference type="Gene3D" id="3.40.50.620">
    <property type="entry name" value="HUPs"/>
    <property type="match status" value="1"/>
</dbReference>
<dbReference type="HAMAP" id="MF_01633">
    <property type="entry name" value="QueC"/>
    <property type="match status" value="1"/>
</dbReference>
<dbReference type="InterPro" id="IPR018317">
    <property type="entry name" value="QueC"/>
</dbReference>
<dbReference type="InterPro" id="IPR014729">
    <property type="entry name" value="Rossmann-like_a/b/a_fold"/>
</dbReference>
<dbReference type="NCBIfam" id="TIGR00364">
    <property type="entry name" value="7-cyano-7-deazaguanine synthase QueC"/>
    <property type="match status" value="1"/>
</dbReference>
<dbReference type="PANTHER" id="PTHR42914">
    <property type="entry name" value="7-CYANO-7-DEAZAGUANINE SYNTHASE"/>
    <property type="match status" value="1"/>
</dbReference>
<dbReference type="PANTHER" id="PTHR42914:SF1">
    <property type="entry name" value="7-CYANO-7-DEAZAGUANINE SYNTHASE"/>
    <property type="match status" value="1"/>
</dbReference>
<dbReference type="Pfam" id="PF06508">
    <property type="entry name" value="QueC"/>
    <property type="match status" value="1"/>
</dbReference>
<dbReference type="PIRSF" id="PIRSF006293">
    <property type="entry name" value="ExsB"/>
    <property type="match status" value="1"/>
</dbReference>
<dbReference type="SUPFAM" id="SSF52402">
    <property type="entry name" value="Adenine nucleotide alpha hydrolases-like"/>
    <property type="match status" value="1"/>
</dbReference>
<feature type="chain" id="PRO_1000186610" description="7-cyano-7-deazaguanine synthase">
    <location>
        <begin position="1"/>
        <end position="235"/>
    </location>
</feature>
<feature type="binding site" evidence="1">
    <location>
        <begin position="12"/>
        <end position="22"/>
    </location>
    <ligand>
        <name>ATP</name>
        <dbReference type="ChEBI" id="CHEBI:30616"/>
    </ligand>
</feature>
<feature type="binding site" evidence="1">
    <location>
        <position position="200"/>
    </location>
    <ligand>
        <name>Zn(2+)</name>
        <dbReference type="ChEBI" id="CHEBI:29105"/>
    </ligand>
</feature>
<feature type="binding site" evidence="1">
    <location>
        <position position="215"/>
    </location>
    <ligand>
        <name>Zn(2+)</name>
        <dbReference type="ChEBI" id="CHEBI:29105"/>
    </ligand>
</feature>
<feature type="binding site" evidence="1">
    <location>
        <position position="218"/>
    </location>
    <ligand>
        <name>Zn(2+)</name>
        <dbReference type="ChEBI" id="CHEBI:29105"/>
    </ligand>
</feature>
<feature type="binding site" evidence="1">
    <location>
        <position position="221"/>
    </location>
    <ligand>
        <name>Zn(2+)</name>
        <dbReference type="ChEBI" id="CHEBI:29105"/>
    </ligand>
</feature>